<dbReference type="EMBL" id="AC004697">
    <property type="protein sequence ID" value="AAC28975.1"/>
    <property type="molecule type" value="Genomic_DNA"/>
</dbReference>
<dbReference type="EMBL" id="CP002685">
    <property type="protein sequence ID" value="AEC09664.1"/>
    <property type="molecule type" value="Genomic_DNA"/>
</dbReference>
<dbReference type="EMBL" id="AK117338">
    <property type="protein sequence ID" value="BAC42008.1"/>
    <property type="molecule type" value="mRNA"/>
</dbReference>
<dbReference type="PIR" id="T02567">
    <property type="entry name" value="T02567"/>
</dbReference>
<dbReference type="RefSeq" id="NP_181467.1">
    <property type="nucleotide sequence ID" value="NM_129492.3"/>
</dbReference>
<dbReference type="SMR" id="O80946"/>
<dbReference type="BioGRID" id="3858">
    <property type="interactions" value="1"/>
</dbReference>
<dbReference type="FunCoup" id="O80946">
    <property type="interactions" value="66"/>
</dbReference>
<dbReference type="IntAct" id="O80946">
    <property type="interactions" value="1"/>
</dbReference>
<dbReference type="STRING" id="3702.O80946"/>
<dbReference type="PaxDb" id="3702-AT2G39350.1"/>
<dbReference type="ProteomicsDB" id="244577"/>
<dbReference type="EnsemblPlants" id="AT2G39350.1">
    <property type="protein sequence ID" value="AT2G39350.1"/>
    <property type="gene ID" value="AT2G39350"/>
</dbReference>
<dbReference type="GeneID" id="818520"/>
<dbReference type="Gramene" id="AT2G39350.1">
    <property type="protein sequence ID" value="AT2G39350.1"/>
    <property type="gene ID" value="AT2G39350"/>
</dbReference>
<dbReference type="KEGG" id="ath:AT2G39350"/>
<dbReference type="Araport" id="AT2G39350"/>
<dbReference type="TAIR" id="AT2G39350">
    <property type="gene designation" value="ABCG1"/>
</dbReference>
<dbReference type="eggNOG" id="KOG0061">
    <property type="taxonomic scope" value="Eukaryota"/>
</dbReference>
<dbReference type="HOGENOM" id="CLU_000604_57_8_1"/>
<dbReference type="InParanoid" id="O80946"/>
<dbReference type="OMA" id="KWNCLFI"/>
<dbReference type="OrthoDB" id="66620at2759"/>
<dbReference type="PhylomeDB" id="O80946"/>
<dbReference type="PRO" id="PR:O80946"/>
<dbReference type="Proteomes" id="UP000006548">
    <property type="component" value="Chromosome 2"/>
</dbReference>
<dbReference type="ExpressionAtlas" id="O80946">
    <property type="expression patterns" value="baseline and differential"/>
</dbReference>
<dbReference type="GO" id="GO:0016020">
    <property type="term" value="C:membrane"/>
    <property type="evidence" value="ECO:0007669"/>
    <property type="project" value="UniProtKB-SubCell"/>
</dbReference>
<dbReference type="GO" id="GO:0140359">
    <property type="term" value="F:ABC-type transporter activity"/>
    <property type="evidence" value="ECO:0007669"/>
    <property type="project" value="InterPro"/>
</dbReference>
<dbReference type="GO" id="GO:0005524">
    <property type="term" value="F:ATP binding"/>
    <property type="evidence" value="ECO:0007669"/>
    <property type="project" value="UniProtKB-KW"/>
</dbReference>
<dbReference type="GO" id="GO:0016887">
    <property type="term" value="F:ATP hydrolysis activity"/>
    <property type="evidence" value="ECO:0007669"/>
    <property type="project" value="InterPro"/>
</dbReference>
<dbReference type="GO" id="GO:0010208">
    <property type="term" value="P:pollen wall assembly"/>
    <property type="evidence" value="ECO:0000316"/>
    <property type="project" value="TAIR"/>
</dbReference>
<dbReference type="GO" id="GO:0009624">
    <property type="term" value="P:response to nematode"/>
    <property type="evidence" value="ECO:0007007"/>
    <property type="project" value="TAIR"/>
</dbReference>
<dbReference type="FunFam" id="3.40.50.300:FF:000530">
    <property type="entry name" value="ABC transporter G family member 6"/>
    <property type="match status" value="1"/>
</dbReference>
<dbReference type="Gene3D" id="3.40.50.300">
    <property type="entry name" value="P-loop containing nucleotide triphosphate hydrolases"/>
    <property type="match status" value="1"/>
</dbReference>
<dbReference type="InterPro" id="IPR003593">
    <property type="entry name" value="AAA+_ATPase"/>
</dbReference>
<dbReference type="InterPro" id="IPR013525">
    <property type="entry name" value="ABC2_TM"/>
</dbReference>
<dbReference type="InterPro" id="IPR003439">
    <property type="entry name" value="ABC_transporter-like_ATP-bd"/>
</dbReference>
<dbReference type="InterPro" id="IPR017871">
    <property type="entry name" value="ABC_transporter-like_CS"/>
</dbReference>
<dbReference type="InterPro" id="IPR050352">
    <property type="entry name" value="ABCG_transporters"/>
</dbReference>
<dbReference type="InterPro" id="IPR027417">
    <property type="entry name" value="P-loop_NTPase"/>
</dbReference>
<dbReference type="PANTHER" id="PTHR48041:SF12">
    <property type="entry name" value="ABC TRANSPORTER G FAMILY MEMBER 1"/>
    <property type="match status" value="1"/>
</dbReference>
<dbReference type="PANTHER" id="PTHR48041">
    <property type="entry name" value="ABC TRANSPORTER G FAMILY MEMBER 28"/>
    <property type="match status" value="1"/>
</dbReference>
<dbReference type="Pfam" id="PF01061">
    <property type="entry name" value="ABC2_membrane"/>
    <property type="match status" value="1"/>
</dbReference>
<dbReference type="Pfam" id="PF00005">
    <property type="entry name" value="ABC_tran"/>
    <property type="match status" value="1"/>
</dbReference>
<dbReference type="SMART" id="SM00382">
    <property type="entry name" value="AAA"/>
    <property type="match status" value="1"/>
</dbReference>
<dbReference type="SUPFAM" id="SSF52540">
    <property type="entry name" value="P-loop containing nucleoside triphosphate hydrolases"/>
    <property type="match status" value="1"/>
</dbReference>
<dbReference type="PROSITE" id="PS00211">
    <property type="entry name" value="ABC_TRANSPORTER_1"/>
    <property type="match status" value="1"/>
</dbReference>
<dbReference type="PROSITE" id="PS50893">
    <property type="entry name" value="ABC_TRANSPORTER_2"/>
    <property type="match status" value="1"/>
</dbReference>
<protein>
    <recommendedName>
        <fullName>ABC transporter G family member 1</fullName>
        <shortName>ABC transporter ABCG.1</shortName>
        <shortName>AtABCG1</shortName>
    </recommendedName>
    <alternativeName>
        <fullName>White-brown complex homolog protein 1</fullName>
        <shortName>AtWBC1</shortName>
    </alternativeName>
</protein>
<keyword id="KW-0067">ATP-binding</keyword>
<keyword id="KW-0472">Membrane</keyword>
<keyword id="KW-0547">Nucleotide-binding</keyword>
<keyword id="KW-1185">Reference proteome</keyword>
<keyword id="KW-0812">Transmembrane</keyword>
<keyword id="KW-1133">Transmembrane helix</keyword>
<keyword id="KW-0813">Transport</keyword>
<evidence type="ECO:0000250" key="1"/>
<evidence type="ECO:0000255" key="2"/>
<evidence type="ECO:0000255" key="3">
    <source>
        <dbReference type="PROSITE-ProRule" id="PRU00434"/>
    </source>
</evidence>
<evidence type="ECO:0000305" key="4"/>
<organism>
    <name type="scientific">Arabidopsis thaliana</name>
    <name type="common">Mouse-ear cress</name>
    <dbReference type="NCBI Taxonomy" id="3702"/>
    <lineage>
        <taxon>Eukaryota</taxon>
        <taxon>Viridiplantae</taxon>
        <taxon>Streptophyta</taxon>
        <taxon>Embryophyta</taxon>
        <taxon>Tracheophyta</taxon>
        <taxon>Spermatophyta</taxon>
        <taxon>Magnoliopsida</taxon>
        <taxon>eudicotyledons</taxon>
        <taxon>Gunneridae</taxon>
        <taxon>Pentapetalae</taxon>
        <taxon>rosids</taxon>
        <taxon>malvids</taxon>
        <taxon>Brassicales</taxon>
        <taxon>Brassicaceae</taxon>
        <taxon>Camelineae</taxon>
        <taxon>Arabidopsis</taxon>
    </lineage>
</organism>
<proteinExistence type="evidence at transcript level"/>
<gene>
    <name type="primary">ABCG1</name>
    <name type="synonym">WBC1</name>
    <name type="ordered locus">At2g39350</name>
    <name type="ORF">T16B24.1</name>
</gene>
<comment type="subcellular location">
    <subcellularLocation>
        <location evidence="1">Membrane</location>
        <topology evidence="1">Multi-pass membrane protein</topology>
    </subcellularLocation>
</comment>
<comment type="similarity">
    <text evidence="4">Belongs to the ABC transporter superfamily. ABCG family. Eye pigment precursor importer (TC 3.A.1.204) subfamily.</text>
</comment>
<sequence>MARIVAANDDDSMELNTISSIHDSTLGQLLKNVSDVRKMAIGDETPVHESLNQDYNDGYMRTVPFVLSFDNLTYNVSVRPKLDFRNLFPRRRTEDPEIAQTARPKTKTLLNNISGETRDGEIMAVLGASGSGKSTLIDALANRIAKGSLKGTVKLNGETLQSRMLKVISAYVMQDDLLFPMLTVEETLMFAAEFRLPRSLPKSKKKLRVQALIDQLGIRNAAKTIIGDEGHRGISGGERRRVSIGIDIIHDPILLFLDEPTSGLDSTSAFMVVKVLKRIAQSGSIVIMSIHQPSHRVLGLLDRLIFLSRGHTVYSGSPASLPRFFTEFGSPIPENENRTEFALDLIRELEGSAGGTRGLIEFNKKWQEMKKQSNRQPPLTPPSSPYPNLTLKEAIAASISRGKLVSGGESVAHGGATTNTTTLAVPAFANPMWIEIKTLSKRSMLNSRRQPELFGIRIASVVITGFILATVFWRLDNSPKGVQERLGFFAFAMSTMFYTCADALPVFLQERYIFMRETAYNAYRRSSYVLSHAIVSFPSLIFLSVAFAATTYWAVGLDGGLTGLLFYCLIILASFWSGSSFVTFLSGVVPSVMLGYTIVVAILAYFLLFSGFFINRNRIPDYWIWFHYMSLVKYPYEAVLQNEFSDATKCFVRGVQIFDNTPLGELPEVMKLKLLGTVSKSLGVTISSTTCLTTGSDILRQQGVVQLSKWNCLFITVAFGFFFRILFYFTLLLGSKNKRR</sequence>
<name>AB1G_ARATH</name>
<reference key="1">
    <citation type="journal article" date="1999" name="Nature">
        <title>Sequence and analysis of chromosome 2 of the plant Arabidopsis thaliana.</title>
        <authorList>
            <person name="Lin X."/>
            <person name="Kaul S."/>
            <person name="Rounsley S.D."/>
            <person name="Shea T.P."/>
            <person name="Benito M.-I."/>
            <person name="Town C.D."/>
            <person name="Fujii C.Y."/>
            <person name="Mason T.M."/>
            <person name="Bowman C.L."/>
            <person name="Barnstead M.E."/>
            <person name="Feldblyum T.V."/>
            <person name="Buell C.R."/>
            <person name="Ketchum K.A."/>
            <person name="Lee J.J."/>
            <person name="Ronning C.M."/>
            <person name="Koo H.L."/>
            <person name="Moffat K.S."/>
            <person name="Cronin L.A."/>
            <person name="Shen M."/>
            <person name="Pai G."/>
            <person name="Van Aken S."/>
            <person name="Umayam L."/>
            <person name="Tallon L.J."/>
            <person name="Gill J.E."/>
            <person name="Adams M.D."/>
            <person name="Carrera A.J."/>
            <person name="Creasy T.H."/>
            <person name="Goodman H.M."/>
            <person name="Somerville C.R."/>
            <person name="Copenhaver G.P."/>
            <person name="Preuss D."/>
            <person name="Nierman W.C."/>
            <person name="White O."/>
            <person name="Eisen J.A."/>
            <person name="Salzberg S.L."/>
            <person name="Fraser C.M."/>
            <person name="Venter J.C."/>
        </authorList>
    </citation>
    <scope>NUCLEOTIDE SEQUENCE [LARGE SCALE GENOMIC DNA]</scope>
    <source>
        <strain>cv. Columbia</strain>
    </source>
</reference>
<reference key="2">
    <citation type="journal article" date="2017" name="Plant J.">
        <title>Araport11: a complete reannotation of the Arabidopsis thaliana reference genome.</title>
        <authorList>
            <person name="Cheng C.Y."/>
            <person name="Krishnakumar V."/>
            <person name="Chan A.P."/>
            <person name="Thibaud-Nissen F."/>
            <person name="Schobel S."/>
            <person name="Town C.D."/>
        </authorList>
    </citation>
    <scope>GENOME REANNOTATION</scope>
    <source>
        <strain>cv. Columbia</strain>
    </source>
</reference>
<reference key="3">
    <citation type="journal article" date="2002" name="Science">
        <title>Functional annotation of a full-length Arabidopsis cDNA collection.</title>
        <authorList>
            <person name="Seki M."/>
            <person name="Narusaka M."/>
            <person name="Kamiya A."/>
            <person name="Ishida J."/>
            <person name="Satou M."/>
            <person name="Sakurai T."/>
            <person name="Nakajima M."/>
            <person name="Enju A."/>
            <person name="Akiyama K."/>
            <person name="Oono Y."/>
            <person name="Muramatsu M."/>
            <person name="Hayashizaki Y."/>
            <person name="Kawai J."/>
            <person name="Carninci P."/>
            <person name="Itoh M."/>
            <person name="Ishii Y."/>
            <person name="Arakawa T."/>
            <person name="Shibata K."/>
            <person name="Shinagawa A."/>
            <person name="Shinozaki K."/>
        </authorList>
    </citation>
    <scope>NUCLEOTIDE SEQUENCE [LARGE SCALE MRNA]</scope>
    <source>
        <strain>cv. Columbia</strain>
    </source>
</reference>
<reference key="4">
    <citation type="journal article" date="2001" name="J. Biol. Chem.">
        <title>The Arabidopsis thaliana ABC protein superfamily, a complete inventory.</title>
        <authorList>
            <person name="Sanchez-Fernandez R."/>
            <person name="Davies T.G."/>
            <person name="Coleman J.O."/>
            <person name="Rea P.A."/>
        </authorList>
    </citation>
    <scope>GENE FAMILY</scope>
    <scope>NOMENCLATURE</scope>
</reference>
<reference key="5">
    <citation type="journal article" date="2008" name="Trends Plant Sci.">
        <title>Plant ABC proteins - a unified nomenclature and updated inventory.</title>
        <authorList>
            <person name="Verrier P.J."/>
            <person name="Bird D."/>
            <person name="Burla B."/>
            <person name="Dassa E."/>
            <person name="Forestier C."/>
            <person name="Geisler M."/>
            <person name="Klein M."/>
            <person name="Kolukisaoglu H.U."/>
            <person name="Lee Y."/>
            <person name="Martinoia E."/>
            <person name="Murphy A."/>
            <person name="Rea P.A."/>
            <person name="Samuels L."/>
            <person name="Schulz B."/>
            <person name="Spalding E.J."/>
            <person name="Yazaki K."/>
            <person name="Theodoulou F.L."/>
        </authorList>
    </citation>
    <scope>GENE FAMILY</scope>
    <scope>NOMENCLATURE</scope>
</reference>
<accession>O80946</accession>
<feature type="chain" id="PRO_0000240673" description="ABC transporter G family member 1">
    <location>
        <begin position="1"/>
        <end position="740"/>
    </location>
</feature>
<feature type="transmembrane region" description="Helical" evidence="2">
    <location>
        <begin position="453"/>
        <end position="473"/>
    </location>
</feature>
<feature type="transmembrane region" description="Helical" evidence="2">
    <location>
        <begin position="488"/>
        <end position="508"/>
    </location>
</feature>
<feature type="transmembrane region" description="Helical" evidence="2">
    <location>
        <begin position="529"/>
        <end position="549"/>
    </location>
</feature>
<feature type="transmembrane region" description="Helical" evidence="2">
    <location>
        <begin position="563"/>
        <end position="585"/>
    </location>
</feature>
<feature type="transmembrane region" description="Helical" evidence="2">
    <location>
        <begin position="594"/>
        <end position="614"/>
    </location>
</feature>
<feature type="transmembrane region" description="Helical" evidence="2">
    <location>
        <begin position="713"/>
        <end position="733"/>
    </location>
</feature>
<feature type="domain" description="ABC transporter" evidence="3">
    <location>
        <begin position="82"/>
        <end position="334"/>
    </location>
</feature>
<feature type="domain" description="ABC transmembrane type-2">
    <location>
        <begin position="434"/>
        <end position="644"/>
    </location>
</feature>
<feature type="binding site" evidence="3">
    <location>
        <begin position="127"/>
        <end position="134"/>
    </location>
    <ligand>
        <name>ATP</name>
        <dbReference type="ChEBI" id="CHEBI:30616"/>
    </ligand>
</feature>